<name>PYRR_LACLS</name>
<proteinExistence type="inferred from homology"/>
<keyword id="KW-0328">Glycosyltransferase</keyword>
<keyword id="KW-0694">RNA-binding</keyword>
<keyword id="KW-0804">Transcription</keyword>
<keyword id="KW-0805">Transcription regulation</keyword>
<keyword id="KW-0806">Transcription termination</keyword>
<keyword id="KW-0808">Transferase</keyword>
<organism>
    <name type="scientific">Lactococcus lactis subsp. cremoris (strain SK11)</name>
    <dbReference type="NCBI Taxonomy" id="272622"/>
    <lineage>
        <taxon>Bacteria</taxon>
        <taxon>Bacillati</taxon>
        <taxon>Bacillota</taxon>
        <taxon>Bacilli</taxon>
        <taxon>Lactobacillales</taxon>
        <taxon>Streptococcaceae</taxon>
        <taxon>Lactococcus</taxon>
        <taxon>Lactococcus cremoris subsp. cremoris</taxon>
    </lineage>
</organism>
<dbReference type="EC" id="2.4.2.9" evidence="1"/>
<dbReference type="EMBL" id="CP000425">
    <property type="protein sequence ID" value="ABJ73208.1"/>
    <property type="molecule type" value="Genomic_DNA"/>
</dbReference>
<dbReference type="RefSeq" id="WP_011676642.1">
    <property type="nucleotide sequence ID" value="NC_008527.1"/>
</dbReference>
<dbReference type="SMR" id="Q02XW4"/>
<dbReference type="GeneID" id="61109848"/>
<dbReference type="KEGG" id="llc:LACR_1712"/>
<dbReference type="HOGENOM" id="CLU_094234_2_1_9"/>
<dbReference type="Proteomes" id="UP000000240">
    <property type="component" value="Chromosome"/>
</dbReference>
<dbReference type="GO" id="GO:0003723">
    <property type="term" value="F:RNA binding"/>
    <property type="evidence" value="ECO:0007669"/>
    <property type="project" value="UniProtKB-UniRule"/>
</dbReference>
<dbReference type="GO" id="GO:0004845">
    <property type="term" value="F:uracil phosphoribosyltransferase activity"/>
    <property type="evidence" value="ECO:0007669"/>
    <property type="project" value="UniProtKB-UniRule"/>
</dbReference>
<dbReference type="GO" id="GO:0006353">
    <property type="term" value="P:DNA-templated transcription termination"/>
    <property type="evidence" value="ECO:0007669"/>
    <property type="project" value="UniProtKB-UniRule"/>
</dbReference>
<dbReference type="CDD" id="cd06223">
    <property type="entry name" value="PRTases_typeI"/>
    <property type="match status" value="1"/>
</dbReference>
<dbReference type="FunFam" id="3.40.50.2020:FF:000020">
    <property type="entry name" value="Bifunctional protein PyrR"/>
    <property type="match status" value="1"/>
</dbReference>
<dbReference type="Gene3D" id="3.40.50.2020">
    <property type="match status" value="1"/>
</dbReference>
<dbReference type="HAMAP" id="MF_01219">
    <property type="entry name" value="PyrR"/>
    <property type="match status" value="1"/>
</dbReference>
<dbReference type="InterPro" id="IPR000836">
    <property type="entry name" value="PRibTrfase_dom"/>
</dbReference>
<dbReference type="InterPro" id="IPR029057">
    <property type="entry name" value="PRTase-like"/>
</dbReference>
<dbReference type="InterPro" id="IPR023050">
    <property type="entry name" value="PyrR"/>
</dbReference>
<dbReference type="InterPro" id="IPR050137">
    <property type="entry name" value="PyrR_bifunctional"/>
</dbReference>
<dbReference type="NCBIfam" id="NF003548">
    <property type="entry name" value="PRK05205.1-4"/>
    <property type="match status" value="1"/>
</dbReference>
<dbReference type="NCBIfam" id="NF003549">
    <property type="entry name" value="PRK05205.1-5"/>
    <property type="match status" value="1"/>
</dbReference>
<dbReference type="PANTHER" id="PTHR11608">
    <property type="entry name" value="BIFUNCTIONAL PROTEIN PYRR"/>
    <property type="match status" value="1"/>
</dbReference>
<dbReference type="PANTHER" id="PTHR11608:SF0">
    <property type="entry name" value="BIFUNCTIONAL PROTEIN PYRR"/>
    <property type="match status" value="1"/>
</dbReference>
<dbReference type="Pfam" id="PF00156">
    <property type="entry name" value="Pribosyltran"/>
    <property type="match status" value="1"/>
</dbReference>
<dbReference type="SUPFAM" id="SSF53271">
    <property type="entry name" value="PRTase-like"/>
    <property type="match status" value="1"/>
</dbReference>
<reference key="1">
    <citation type="journal article" date="2006" name="Proc. Natl. Acad. Sci. U.S.A.">
        <title>Comparative genomics of the lactic acid bacteria.</title>
        <authorList>
            <person name="Makarova K.S."/>
            <person name="Slesarev A."/>
            <person name="Wolf Y.I."/>
            <person name="Sorokin A."/>
            <person name="Mirkin B."/>
            <person name="Koonin E.V."/>
            <person name="Pavlov A."/>
            <person name="Pavlova N."/>
            <person name="Karamychev V."/>
            <person name="Polouchine N."/>
            <person name="Shakhova V."/>
            <person name="Grigoriev I."/>
            <person name="Lou Y."/>
            <person name="Rohksar D."/>
            <person name="Lucas S."/>
            <person name="Huang K."/>
            <person name="Goodstein D.M."/>
            <person name="Hawkins T."/>
            <person name="Plengvidhya V."/>
            <person name="Welker D."/>
            <person name="Hughes J."/>
            <person name="Goh Y."/>
            <person name="Benson A."/>
            <person name="Baldwin K."/>
            <person name="Lee J.-H."/>
            <person name="Diaz-Muniz I."/>
            <person name="Dosti B."/>
            <person name="Smeianov V."/>
            <person name="Wechter W."/>
            <person name="Barabote R."/>
            <person name="Lorca G."/>
            <person name="Altermann E."/>
            <person name="Barrangou R."/>
            <person name="Ganesan B."/>
            <person name="Xie Y."/>
            <person name="Rawsthorne H."/>
            <person name="Tamir D."/>
            <person name="Parker C."/>
            <person name="Breidt F."/>
            <person name="Broadbent J.R."/>
            <person name="Hutkins R."/>
            <person name="O'Sullivan D."/>
            <person name="Steele J."/>
            <person name="Unlu G."/>
            <person name="Saier M.H. Jr."/>
            <person name="Klaenhammer T."/>
            <person name="Richardson P."/>
            <person name="Kozyavkin S."/>
            <person name="Weimer B.C."/>
            <person name="Mills D.A."/>
        </authorList>
    </citation>
    <scope>NUCLEOTIDE SEQUENCE [LARGE SCALE GENOMIC DNA]</scope>
    <source>
        <strain>SK11</strain>
    </source>
</reference>
<protein>
    <recommendedName>
        <fullName evidence="1">Bifunctional protein PyrR</fullName>
    </recommendedName>
    <domain>
        <recommendedName>
            <fullName evidence="1">Pyrimidine operon regulatory protein</fullName>
        </recommendedName>
    </domain>
    <domain>
        <recommendedName>
            <fullName evidence="1">Uracil phosphoribosyltransferase</fullName>
            <shortName evidence="1">UPRTase</shortName>
            <ecNumber evidence="1">2.4.2.9</ecNumber>
        </recommendedName>
    </domain>
</protein>
<accession>Q02XW4</accession>
<comment type="function">
    <text evidence="1">Regulates transcriptional attenuation of the pyrimidine nucleotide (pyr) operon by binding in a uridine-dependent manner to specific sites on pyr mRNA. This disrupts an antiterminator hairpin in the RNA and favors formation of a downstream transcription terminator, leading to a reduced expression of downstream genes.</text>
</comment>
<comment type="function">
    <text evidence="1">Also displays a weak uracil phosphoribosyltransferase activity which is not physiologically significant.</text>
</comment>
<comment type="catalytic activity">
    <reaction evidence="1">
        <text>UMP + diphosphate = 5-phospho-alpha-D-ribose 1-diphosphate + uracil</text>
        <dbReference type="Rhea" id="RHEA:13017"/>
        <dbReference type="ChEBI" id="CHEBI:17568"/>
        <dbReference type="ChEBI" id="CHEBI:33019"/>
        <dbReference type="ChEBI" id="CHEBI:57865"/>
        <dbReference type="ChEBI" id="CHEBI:58017"/>
        <dbReference type="EC" id="2.4.2.9"/>
    </reaction>
</comment>
<comment type="subunit">
    <text evidence="1">Homodimer and homohexamer; in equilibrium.</text>
</comment>
<comment type="similarity">
    <text evidence="1">Belongs to the purine/pyrimidine phosphoribosyltransferase family. PyrR subfamily.</text>
</comment>
<evidence type="ECO:0000255" key="1">
    <source>
        <dbReference type="HAMAP-Rule" id="MF_01219"/>
    </source>
</evidence>
<sequence length="173" mass="19812">MARKEIIDEITMKRAITRITYEIIERNKELDKLVLIGIKTRGVYLAKRIQERLQQLEGLEIPFGELDTRPFRDDKQAQEDTTEIDIDITGKDVILVDDVLYTGRTIRAAIDGIVKLGRPARVQLAVLVDRGHRELPIRADYVGKNIPTGHDEEIIVQMSEHDGNDSILIKRED</sequence>
<feature type="chain" id="PRO_1000053841" description="Bifunctional protein PyrR">
    <location>
        <begin position="1"/>
        <end position="173"/>
    </location>
</feature>
<feature type="short sequence motif" description="PRPP-binding" evidence="1">
    <location>
        <begin position="93"/>
        <end position="105"/>
    </location>
</feature>
<gene>
    <name evidence="1" type="primary">pyrR</name>
    <name type="ordered locus">LACR_1712</name>
</gene>